<sequence>MNHSDTLSLSLELLEQPSVTPIDHTCQTIMADRLAKVGFHIEPMRFGDVDNLWARRGTEGPVFCFAGHTDVVPTGRLDAWNSDPFAPEIRDGKLYGRGSADMKTALAAMVVASERFVAKHPNHKGSIAFLITSDEEGPAVNGTVKVIETLEKRNEKITWCLVGEPSSTHKLGDIVKNGRRGSLNAVLKVQGKQGHVAYPHLARNPIHEASPALAELCQTVWDNGNEYFPATSFQISNIHAGTGATNVIPGALEVTFNFRYSTEVTAEQLKQRVHEILDKHGLQYEIVWNLSGLPFLTPVGELVNAAQTAILNVTGTETELSTSGGTSDGRFIAPTGAQVLELGVLNATIHQINEHVDVHDLDPLTDIYEQILENLLA</sequence>
<name>DAPE_ACIB5</name>
<organism>
    <name type="scientific">Acinetobacter baumannii (strain AB0057)</name>
    <dbReference type="NCBI Taxonomy" id="480119"/>
    <lineage>
        <taxon>Bacteria</taxon>
        <taxon>Pseudomonadati</taxon>
        <taxon>Pseudomonadota</taxon>
        <taxon>Gammaproteobacteria</taxon>
        <taxon>Moraxellales</taxon>
        <taxon>Moraxellaceae</taxon>
        <taxon>Acinetobacter</taxon>
        <taxon>Acinetobacter calcoaceticus/baumannii complex</taxon>
    </lineage>
</organism>
<keyword id="KW-0028">Amino-acid biosynthesis</keyword>
<keyword id="KW-0170">Cobalt</keyword>
<keyword id="KW-0220">Diaminopimelate biosynthesis</keyword>
<keyword id="KW-0378">Hydrolase</keyword>
<keyword id="KW-0457">Lysine biosynthesis</keyword>
<keyword id="KW-0479">Metal-binding</keyword>
<keyword id="KW-0862">Zinc</keyword>
<comment type="function">
    <text evidence="1">Catalyzes the hydrolysis of N-succinyl-L,L-diaminopimelic acid (SDAP), forming succinate and LL-2,6-diaminopimelate (DAP), an intermediate involved in the bacterial biosynthesis of lysine and meso-diaminopimelic acid, an essential component of bacterial cell walls.</text>
</comment>
<comment type="catalytic activity">
    <reaction evidence="1">
        <text>N-succinyl-(2S,6S)-2,6-diaminopimelate + H2O = (2S,6S)-2,6-diaminopimelate + succinate</text>
        <dbReference type="Rhea" id="RHEA:22608"/>
        <dbReference type="ChEBI" id="CHEBI:15377"/>
        <dbReference type="ChEBI" id="CHEBI:30031"/>
        <dbReference type="ChEBI" id="CHEBI:57609"/>
        <dbReference type="ChEBI" id="CHEBI:58087"/>
        <dbReference type="EC" id="3.5.1.18"/>
    </reaction>
</comment>
<comment type="cofactor">
    <cofactor evidence="1">
        <name>Zn(2+)</name>
        <dbReference type="ChEBI" id="CHEBI:29105"/>
    </cofactor>
    <cofactor evidence="1">
        <name>Co(2+)</name>
        <dbReference type="ChEBI" id="CHEBI:48828"/>
    </cofactor>
    <text evidence="1">Binds 2 Zn(2+) or Co(2+) ions per subunit.</text>
</comment>
<comment type="pathway">
    <text evidence="1">Amino-acid biosynthesis; L-lysine biosynthesis via DAP pathway; LL-2,6-diaminopimelate from (S)-tetrahydrodipicolinate (succinylase route): step 3/3.</text>
</comment>
<comment type="subunit">
    <text evidence="1">Homodimer.</text>
</comment>
<comment type="similarity">
    <text evidence="1">Belongs to the peptidase M20A family. DapE subfamily.</text>
</comment>
<protein>
    <recommendedName>
        <fullName evidence="1">Succinyl-diaminopimelate desuccinylase</fullName>
        <shortName evidence="1">SDAP desuccinylase</shortName>
        <ecNumber evidence="1">3.5.1.18</ecNumber>
    </recommendedName>
    <alternativeName>
        <fullName evidence="1">N-succinyl-LL-2,6-diaminoheptanedioate amidohydrolase</fullName>
    </alternativeName>
</protein>
<accession>B7I842</accession>
<feature type="chain" id="PRO_0000375442" description="Succinyl-diaminopimelate desuccinylase">
    <location>
        <begin position="1"/>
        <end position="377"/>
    </location>
</feature>
<feature type="active site" evidence="1">
    <location>
        <position position="70"/>
    </location>
</feature>
<feature type="active site" description="Proton acceptor" evidence="1">
    <location>
        <position position="135"/>
    </location>
</feature>
<feature type="binding site" evidence="1">
    <location>
        <position position="68"/>
    </location>
    <ligand>
        <name>Zn(2+)</name>
        <dbReference type="ChEBI" id="CHEBI:29105"/>
        <label>1</label>
    </ligand>
</feature>
<feature type="binding site" evidence="1">
    <location>
        <position position="101"/>
    </location>
    <ligand>
        <name>Zn(2+)</name>
        <dbReference type="ChEBI" id="CHEBI:29105"/>
        <label>1</label>
    </ligand>
</feature>
<feature type="binding site" evidence="1">
    <location>
        <position position="101"/>
    </location>
    <ligand>
        <name>Zn(2+)</name>
        <dbReference type="ChEBI" id="CHEBI:29105"/>
        <label>2</label>
    </ligand>
</feature>
<feature type="binding site" evidence="1">
    <location>
        <position position="136"/>
    </location>
    <ligand>
        <name>Zn(2+)</name>
        <dbReference type="ChEBI" id="CHEBI:29105"/>
        <label>2</label>
    </ligand>
</feature>
<feature type="binding site" evidence="1">
    <location>
        <position position="164"/>
    </location>
    <ligand>
        <name>Zn(2+)</name>
        <dbReference type="ChEBI" id="CHEBI:29105"/>
        <label>1</label>
    </ligand>
</feature>
<feature type="binding site" evidence="1">
    <location>
        <position position="350"/>
    </location>
    <ligand>
        <name>Zn(2+)</name>
        <dbReference type="ChEBI" id="CHEBI:29105"/>
        <label>2</label>
    </ligand>
</feature>
<reference key="1">
    <citation type="journal article" date="2008" name="J. Bacteriol.">
        <title>Comparative genome sequence analysis of multidrug-resistant Acinetobacter baumannii.</title>
        <authorList>
            <person name="Adams M.D."/>
            <person name="Goglin K."/>
            <person name="Molyneaux N."/>
            <person name="Hujer K.M."/>
            <person name="Lavender H."/>
            <person name="Jamison J.J."/>
            <person name="MacDonald I.J."/>
            <person name="Martin K.M."/>
            <person name="Russo T."/>
            <person name="Campagnari A.A."/>
            <person name="Hujer A.M."/>
            <person name="Bonomo R.A."/>
            <person name="Gill S.R."/>
        </authorList>
    </citation>
    <scope>NUCLEOTIDE SEQUENCE [LARGE SCALE GENOMIC DNA]</scope>
    <source>
        <strain>AB0057</strain>
    </source>
</reference>
<evidence type="ECO:0000255" key="1">
    <source>
        <dbReference type="HAMAP-Rule" id="MF_01690"/>
    </source>
</evidence>
<proteinExistence type="inferred from homology"/>
<gene>
    <name evidence="1" type="primary">dapE</name>
    <name type="ordered locus">AB57_3307</name>
</gene>
<dbReference type="EC" id="3.5.1.18" evidence="1"/>
<dbReference type="EMBL" id="CP001182">
    <property type="protein sequence ID" value="ACJ41885.1"/>
    <property type="molecule type" value="Genomic_DNA"/>
</dbReference>
<dbReference type="RefSeq" id="WP_001016570.1">
    <property type="nucleotide sequence ID" value="NC_011586.2"/>
</dbReference>
<dbReference type="SMR" id="B7I842"/>
<dbReference type="KEGG" id="abn:AB57_3307"/>
<dbReference type="HOGENOM" id="CLU_021802_4_0_6"/>
<dbReference type="UniPathway" id="UPA00034">
    <property type="reaction ID" value="UER00021"/>
</dbReference>
<dbReference type="Proteomes" id="UP000007094">
    <property type="component" value="Chromosome"/>
</dbReference>
<dbReference type="GO" id="GO:0008777">
    <property type="term" value="F:acetylornithine deacetylase activity"/>
    <property type="evidence" value="ECO:0007669"/>
    <property type="project" value="TreeGrafter"/>
</dbReference>
<dbReference type="GO" id="GO:0050897">
    <property type="term" value="F:cobalt ion binding"/>
    <property type="evidence" value="ECO:0007669"/>
    <property type="project" value="UniProtKB-UniRule"/>
</dbReference>
<dbReference type="GO" id="GO:0009014">
    <property type="term" value="F:succinyl-diaminopimelate desuccinylase activity"/>
    <property type="evidence" value="ECO:0007669"/>
    <property type="project" value="UniProtKB-UniRule"/>
</dbReference>
<dbReference type="GO" id="GO:0008270">
    <property type="term" value="F:zinc ion binding"/>
    <property type="evidence" value="ECO:0007669"/>
    <property type="project" value="UniProtKB-UniRule"/>
</dbReference>
<dbReference type="GO" id="GO:0019877">
    <property type="term" value="P:diaminopimelate biosynthetic process"/>
    <property type="evidence" value="ECO:0007669"/>
    <property type="project" value="UniProtKB-UniRule"/>
</dbReference>
<dbReference type="GO" id="GO:0006526">
    <property type="term" value="P:L-arginine biosynthetic process"/>
    <property type="evidence" value="ECO:0007669"/>
    <property type="project" value="TreeGrafter"/>
</dbReference>
<dbReference type="GO" id="GO:0009089">
    <property type="term" value="P:lysine biosynthetic process via diaminopimelate"/>
    <property type="evidence" value="ECO:0007669"/>
    <property type="project" value="UniProtKB-UniRule"/>
</dbReference>
<dbReference type="CDD" id="cd03891">
    <property type="entry name" value="M20_DapE_proteobac"/>
    <property type="match status" value="1"/>
</dbReference>
<dbReference type="FunFam" id="3.30.70.360:FF:000011">
    <property type="entry name" value="Succinyl-diaminopimelate desuccinylase"/>
    <property type="match status" value="1"/>
</dbReference>
<dbReference type="FunFam" id="3.40.630.10:FF:000005">
    <property type="entry name" value="Succinyl-diaminopimelate desuccinylase"/>
    <property type="match status" value="1"/>
</dbReference>
<dbReference type="Gene3D" id="3.40.630.10">
    <property type="entry name" value="Zn peptidases"/>
    <property type="match status" value="2"/>
</dbReference>
<dbReference type="HAMAP" id="MF_01690">
    <property type="entry name" value="DapE"/>
    <property type="match status" value="1"/>
</dbReference>
<dbReference type="InterPro" id="IPR036264">
    <property type="entry name" value="Bact_exopeptidase_dim_dom"/>
</dbReference>
<dbReference type="InterPro" id="IPR005941">
    <property type="entry name" value="DapE_proteobac"/>
</dbReference>
<dbReference type="InterPro" id="IPR002933">
    <property type="entry name" value="Peptidase_M20"/>
</dbReference>
<dbReference type="InterPro" id="IPR011650">
    <property type="entry name" value="Peptidase_M20_dimer"/>
</dbReference>
<dbReference type="InterPro" id="IPR050072">
    <property type="entry name" value="Peptidase_M20A"/>
</dbReference>
<dbReference type="NCBIfam" id="TIGR01246">
    <property type="entry name" value="dapE_proteo"/>
    <property type="match status" value="1"/>
</dbReference>
<dbReference type="NCBIfam" id="NF009557">
    <property type="entry name" value="PRK13009.1"/>
    <property type="match status" value="1"/>
</dbReference>
<dbReference type="PANTHER" id="PTHR43808">
    <property type="entry name" value="ACETYLORNITHINE DEACETYLASE"/>
    <property type="match status" value="1"/>
</dbReference>
<dbReference type="PANTHER" id="PTHR43808:SF31">
    <property type="entry name" value="N-ACETYL-L-CITRULLINE DEACETYLASE"/>
    <property type="match status" value="1"/>
</dbReference>
<dbReference type="Pfam" id="PF07687">
    <property type="entry name" value="M20_dimer"/>
    <property type="match status" value="1"/>
</dbReference>
<dbReference type="Pfam" id="PF01546">
    <property type="entry name" value="Peptidase_M20"/>
    <property type="match status" value="1"/>
</dbReference>
<dbReference type="SUPFAM" id="SSF55031">
    <property type="entry name" value="Bacterial exopeptidase dimerisation domain"/>
    <property type="match status" value="1"/>
</dbReference>
<dbReference type="SUPFAM" id="SSF53187">
    <property type="entry name" value="Zn-dependent exopeptidases"/>
    <property type="match status" value="1"/>
</dbReference>